<reference key="1">
    <citation type="journal article" date="1997" name="Plant Cell">
        <title>A new class of plastidic phosphate translocators: a putative link between primary and secondary metabolism by the phosphoenolpyruvate/phosphate antiporter.</title>
        <authorList>
            <person name="Fischer K."/>
            <person name="Kammerer B."/>
            <person name="Gutensohn M."/>
            <person name="Arbinger B."/>
            <person name="Weber A."/>
            <person name="Hausler R.E."/>
            <person name="Fluegge U.-I."/>
        </authorList>
    </citation>
    <scope>NUCLEOTIDE SEQUENCE [MRNA]</scope>
    <source>
        <tissue>Flower</tissue>
    </source>
</reference>
<proteinExistence type="evidence at transcript level"/>
<evidence type="ECO:0000250" key="1"/>
<evidence type="ECO:0000255" key="2"/>
<evidence type="ECO:0000305" key="3"/>
<accession>P52178</accession>
<organism>
    <name type="scientific">Brassica oleracea var. botrytis</name>
    <name type="common">Cauliflower</name>
    <dbReference type="NCBI Taxonomy" id="3715"/>
    <lineage>
        <taxon>Eukaryota</taxon>
        <taxon>Viridiplantae</taxon>
        <taxon>Streptophyta</taxon>
        <taxon>Embryophyta</taxon>
        <taxon>Tracheophyta</taxon>
        <taxon>Spermatophyta</taxon>
        <taxon>Magnoliopsida</taxon>
        <taxon>eudicotyledons</taxon>
        <taxon>Gunneridae</taxon>
        <taxon>Pentapetalae</taxon>
        <taxon>rosids</taxon>
        <taxon>malvids</taxon>
        <taxon>Brassicales</taxon>
        <taxon>Brassicaceae</taxon>
        <taxon>Brassiceae</taxon>
        <taxon>Brassica</taxon>
    </lineage>
</organism>
<feature type="transit peptide" description="Chloroplast" evidence="2">
    <location>
        <begin position="1"/>
        <end position="82"/>
    </location>
</feature>
<feature type="chain" id="PRO_0000035704" description="Triose phosphate/phosphate translocator, non-green plastid, chloroplastic">
    <location>
        <begin position="83"/>
        <end position="402"/>
    </location>
</feature>
<feature type="topological domain" description="Chloroplast intermembrane" evidence="2">
    <location>
        <begin position="83"/>
        <end position="98"/>
    </location>
</feature>
<feature type="transmembrane region" description="Helical" evidence="2">
    <location>
        <begin position="99"/>
        <end position="119"/>
    </location>
</feature>
<feature type="topological domain" description="Lumenal" evidence="2">
    <location>
        <begin position="120"/>
        <end position="131"/>
    </location>
</feature>
<feature type="transmembrane region" description="Helical" evidence="2">
    <location>
        <begin position="132"/>
        <end position="152"/>
    </location>
</feature>
<feature type="topological domain" description="Chloroplast intermembrane" evidence="2">
    <location>
        <begin position="153"/>
        <end position="209"/>
    </location>
</feature>
<feature type="transmembrane region" description="Helical" evidence="2">
    <location>
        <begin position="210"/>
        <end position="230"/>
    </location>
</feature>
<feature type="topological domain" description="Lumenal" evidence="2">
    <location>
        <begin position="231"/>
        <end position="278"/>
    </location>
</feature>
<feature type="transmembrane region" description="Helical" evidence="2">
    <location>
        <begin position="279"/>
        <end position="298"/>
    </location>
</feature>
<feature type="topological domain" description="Chloroplast intermembrane" evidence="2">
    <location>
        <begin position="299"/>
        <end position="374"/>
    </location>
</feature>
<feature type="transmembrane region" description="Helical" evidence="2">
    <location>
        <begin position="375"/>
        <end position="394"/>
    </location>
</feature>
<feature type="topological domain" description="Lumenal" evidence="2">
    <location>
        <begin position="395"/>
        <end position="402"/>
    </location>
</feature>
<feature type="domain" description="EamA">
    <location>
        <begin position="118"/>
        <end position="236"/>
    </location>
</feature>
<dbReference type="EMBL" id="U13632">
    <property type="protein sequence ID" value="AAA84892.1"/>
    <property type="molecule type" value="mRNA"/>
</dbReference>
<dbReference type="PIR" id="T14438">
    <property type="entry name" value="T14438"/>
</dbReference>
<dbReference type="SMR" id="P52178"/>
<dbReference type="TCDB" id="2.A.7.9.2">
    <property type="family name" value="the drug/metabolite transporter (dmt) superfamily"/>
</dbReference>
<dbReference type="GO" id="GO:0031969">
    <property type="term" value="C:chloroplast membrane"/>
    <property type="evidence" value="ECO:0007669"/>
    <property type="project" value="UniProtKB-SubCell"/>
</dbReference>
<dbReference type="GO" id="GO:0015605">
    <property type="term" value="F:organophosphate ester transmembrane transporter activity"/>
    <property type="evidence" value="ECO:0007669"/>
    <property type="project" value="UniProtKB-ARBA"/>
</dbReference>
<dbReference type="GO" id="GO:0015120">
    <property type="term" value="F:phosphoglycerate transmembrane transporter activity"/>
    <property type="evidence" value="ECO:0007669"/>
    <property type="project" value="UniProtKB-ARBA"/>
</dbReference>
<dbReference type="InterPro" id="IPR004853">
    <property type="entry name" value="Sugar_P_trans_dom"/>
</dbReference>
<dbReference type="InterPro" id="IPR004696">
    <property type="entry name" value="Tpt_PEP_transl"/>
</dbReference>
<dbReference type="InterPro" id="IPR050186">
    <property type="entry name" value="TPT_transporter"/>
</dbReference>
<dbReference type="NCBIfam" id="TIGR00817">
    <property type="entry name" value="tpt"/>
    <property type="match status" value="1"/>
</dbReference>
<dbReference type="PANTHER" id="PTHR11132">
    <property type="entry name" value="SOLUTE CARRIER FAMILY 35"/>
    <property type="match status" value="1"/>
</dbReference>
<dbReference type="Pfam" id="PF03151">
    <property type="entry name" value="TPT"/>
    <property type="match status" value="1"/>
</dbReference>
<dbReference type="SUPFAM" id="SSF103481">
    <property type="entry name" value="Multidrug resistance efflux transporter EmrE"/>
    <property type="match status" value="2"/>
</dbReference>
<gene>
    <name type="primary">NGTPT</name>
</gene>
<name>TPT2_BRAOB</name>
<sequence length="402" mass="43523">MQSSAVFSASPSLPLLKPGRLSLRHPVTASSNLSVSPPNVVSVPPLPRRSWRLASSDSPLRAWSGLPSVSSPSLDTNRFKTAATAVPEEGEGSGKMTKVLELGLLFAMWYLFNIYFNIYNKQVLKALHAPMTVTLVQFAVGSVLITFMWALNLYKRPKISAAQLAAILPLAVVHTLGNLFTNMSLGKVSVSFTHTIKAMEPFFSVVLSAMFLGEVPTPWVIGSIIPIVGGVALASVTEVSFNWAGFLSAMASNLTNQSRNVLSKKVMVKKDDSLDNITLFSIITLMSLFLMAPVTFFSEGIKFTPSYIQSAGVNVQQIYTKSLIAALCFHAYQQVSYMILARVSPVTHSVGNCVKRVVVIVSSVIFFKTPVSPVNAFGTGIALAGVFLYSRVKRIKPKPKTA</sequence>
<protein>
    <recommendedName>
        <fullName>Triose phosphate/phosphate translocator, non-green plastid, chloroplastic</fullName>
        <shortName>CTPT</shortName>
    </recommendedName>
</protein>
<keyword id="KW-0150">Chloroplast</keyword>
<keyword id="KW-0472">Membrane</keyword>
<keyword id="KW-0934">Plastid</keyword>
<keyword id="KW-0809">Transit peptide</keyword>
<keyword id="KW-0812">Transmembrane</keyword>
<keyword id="KW-1133">Transmembrane helix</keyword>
<keyword id="KW-0813">Transport</keyword>
<comment type="function">
    <text>Mediates the export of fixed carbons from the chloroplasts into the cytosol in the form of triose phosphates.</text>
</comment>
<comment type="subunit">
    <text evidence="1">Homodimer.</text>
</comment>
<comment type="subcellular location">
    <subcellularLocation>
        <location evidence="1">Plastid</location>
        <location evidence="1">Chloroplast membrane</location>
        <topology evidence="1">Multi-pass membrane protein</topology>
    </subcellularLocation>
    <text evidence="1">Located in zones of contact between the inner and outer membrane of the chloroplast.</text>
</comment>
<comment type="similarity">
    <text evidence="3">Belongs to the TPT transporter family. TPT (TC 2.A.7.9) subfamily.</text>
</comment>